<reference key="1">
    <citation type="journal article" date="2005" name="Science">
        <title>Genome sequence of the PCE-dechlorinating bacterium Dehalococcoides ethenogenes.</title>
        <authorList>
            <person name="Seshadri R."/>
            <person name="Adrian L."/>
            <person name="Fouts D.E."/>
            <person name="Eisen J.A."/>
            <person name="Phillippy A.M."/>
            <person name="Methe B.A."/>
            <person name="Ward N.L."/>
            <person name="Nelson W.C."/>
            <person name="DeBoy R.T."/>
            <person name="Khouri H.M."/>
            <person name="Kolonay J.F."/>
            <person name="Dodson R.J."/>
            <person name="Daugherty S.C."/>
            <person name="Brinkac L.M."/>
            <person name="Sullivan S.A."/>
            <person name="Madupu R."/>
            <person name="Nelson K.E."/>
            <person name="Kang K.H."/>
            <person name="Impraim M."/>
            <person name="Tran K."/>
            <person name="Robinson J.M."/>
            <person name="Forberger H.A."/>
            <person name="Fraser C.M."/>
            <person name="Zinder S.H."/>
            <person name="Heidelberg J.F."/>
        </authorList>
    </citation>
    <scope>NUCLEOTIDE SEQUENCE [LARGE SCALE GENOMIC DNA]</scope>
    <source>
        <strain>ATCC BAA-2266 / KCTC 15142 / 195</strain>
    </source>
</reference>
<organism>
    <name type="scientific">Dehalococcoides mccartyi (strain ATCC BAA-2266 / KCTC 15142 / 195)</name>
    <name type="common">Dehalococcoides ethenogenes (strain 195)</name>
    <dbReference type="NCBI Taxonomy" id="243164"/>
    <lineage>
        <taxon>Bacteria</taxon>
        <taxon>Bacillati</taxon>
        <taxon>Chloroflexota</taxon>
        <taxon>Dehalococcoidia</taxon>
        <taxon>Dehalococcoidales</taxon>
        <taxon>Dehalococcoidaceae</taxon>
        <taxon>Dehalococcoides</taxon>
    </lineage>
</organism>
<dbReference type="EC" id="4.1.1.48" evidence="1"/>
<dbReference type="EMBL" id="CP000027">
    <property type="protein sequence ID" value="AAW39328.1"/>
    <property type="molecule type" value="Genomic_DNA"/>
</dbReference>
<dbReference type="RefSeq" id="WP_010937161.1">
    <property type="nucleotide sequence ID" value="NC_002936.3"/>
</dbReference>
<dbReference type="SMR" id="Q3Z6G5"/>
<dbReference type="FunCoup" id="Q3Z6G5">
    <property type="interactions" value="322"/>
</dbReference>
<dbReference type="STRING" id="243164.DET1484"/>
<dbReference type="GeneID" id="3229286"/>
<dbReference type="KEGG" id="det:DET1484"/>
<dbReference type="PATRIC" id="fig|243164.10.peg.1400"/>
<dbReference type="eggNOG" id="COG0134">
    <property type="taxonomic scope" value="Bacteria"/>
</dbReference>
<dbReference type="HOGENOM" id="CLU_034247_2_0_0"/>
<dbReference type="InParanoid" id="Q3Z6G5"/>
<dbReference type="UniPathway" id="UPA00035">
    <property type="reaction ID" value="UER00043"/>
</dbReference>
<dbReference type="Proteomes" id="UP000008289">
    <property type="component" value="Chromosome"/>
</dbReference>
<dbReference type="GO" id="GO:0004425">
    <property type="term" value="F:indole-3-glycerol-phosphate synthase activity"/>
    <property type="evidence" value="ECO:0007669"/>
    <property type="project" value="UniProtKB-UniRule"/>
</dbReference>
<dbReference type="GO" id="GO:0004640">
    <property type="term" value="F:phosphoribosylanthranilate isomerase activity"/>
    <property type="evidence" value="ECO:0007669"/>
    <property type="project" value="TreeGrafter"/>
</dbReference>
<dbReference type="GO" id="GO:0000162">
    <property type="term" value="P:L-tryptophan biosynthetic process"/>
    <property type="evidence" value="ECO:0007669"/>
    <property type="project" value="UniProtKB-UniRule"/>
</dbReference>
<dbReference type="CDD" id="cd00331">
    <property type="entry name" value="IGPS"/>
    <property type="match status" value="1"/>
</dbReference>
<dbReference type="FunFam" id="3.20.20.70:FF:000024">
    <property type="entry name" value="Indole-3-glycerol phosphate synthase"/>
    <property type="match status" value="1"/>
</dbReference>
<dbReference type="Gene3D" id="3.20.20.70">
    <property type="entry name" value="Aldolase class I"/>
    <property type="match status" value="1"/>
</dbReference>
<dbReference type="HAMAP" id="MF_00134_B">
    <property type="entry name" value="IGPS_B"/>
    <property type="match status" value="1"/>
</dbReference>
<dbReference type="InterPro" id="IPR013785">
    <property type="entry name" value="Aldolase_TIM"/>
</dbReference>
<dbReference type="InterPro" id="IPR045186">
    <property type="entry name" value="Indole-3-glycerol_P_synth"/>
</dbReference>
<dbReference type="InterPro" id="IPR013798">
    <property type="entry name" value="Indole-3-glycerol_P_synth_dom"/>
</dbReference>
<dbReference type="InterPro" id="IPR001468">
    <property type="entry name" value="Indole-3-GlycerolPSynthase_CS"/>
</dbReference>
<dbReference type="InterPro" id="IPR011060">
    <property type="entry name" value="RibuloseP-bd_barrel"/>
</dbReference>
<dbReference type="NCBIfam" id="NF001377">
    <property type="entry name" value="PRK00278.2-4"/>
    <property type="match status" value="1"/>
</dbReference>
<dbReference type="PANTHER" id="PTHR22854:SF2">
    <property type="entry name" value="INDOLE-3-GLYCEROL-PHOSPHATE SYNTHASE"/>
    <property type="match status" value="1"/>
</dbReference>
<dbReference type="PANTHER" id="PTHR22854">
    <property type="entry name" value="TRYPTOPHAN BIOSYNTHESIS PROTEIN"/>
    <property type="match status" value="1"/>
</dbReference>
<dbReference type="Pfam" id="PF00218">
    <property type="entry name" value="IGPS"/>
    <property type="match status" value="1"/>
</dbReference>
<dbReference type="SUPFAM" id="SSF51366">
    <property type="entry name" value="Ribulose-phoshate binding barrel"/>
    <property type="match status" value="1"/>
</dbReference>
<dbReference type="PROSITE" id="PS00614">
    <property type="entry name" value="IGPS"/>
    <property type="match status" value="1"/>
</dbReference>
<protein>
    <recommendedName>
        <fullName evidence="1">Indole-3-glycerol phosphate synthase</fullName>
        <shortName evidence="1">IGPS</shortName>
        <ecNumber evidence="1">4.1.1.48</ecNumber>
    </recommendedName>
</protein>
<proteinExistence type="inferred from homology"/>
<evidence type="ECO:0000255" key="1">
    <source>
        <dbReference type="HAMAP-Rule" id="MF_00134"/>
    </source>
</evidence>
<gene>
    <name evidence="1" type="primary">trpC</name>
    <name type="ordered locus">DET1484</name>
</gene>
<feature type="chain" id="PRO_1000018477" description="Indole-3-glycerol phosphate synthase">
    <location>
        <begin position="1"/>
        <end position="259"/>
    </location>
</feature>
<comment type="catalytic activity">
    <reaction evidence="1">
        <text>1-(2-carboxyphenylamino)-1-deoxy-D-ribulose 5-phosphate + H(+) = (1S,2R)-1-C-(indol-3-yl)glycerol 3-phosphate + CO2 + H2O</text>
        <dbReference type="Rhea" id="RHEA:23476"/>
        <dbReference type="ChEBI" id="CHEBI:15377"/>
        <dbReference type="ChEBI" id="CHEBI:15378"/>
        <dbReference type="ChEBI" id="CHEBI:16526"/>
        <dbReference type="ChEBI" id="CHEBI:58613"/>
        <dbReference type="ChEBI" id="CHEBI:58866"/>
        <dbReference type="EC" id="4.1.1.48"/>
    </reaction>
</comment>
<comment type="pathway">
    <text evidence="1">Amino-acid biosynthesis; L-tryptophan biosynthesis; L-tryptophan from chorismate: step 4/5.</text>
</comment>
<comment type="similarity">
    <text evidence="1">Belongs to the TrpC family.</text>
</comment>
<name>TRPC_DEHM1</name>
<accession>Q3Z6G5</accession>
<keyword id="KW-0028">Amino-acid biosynthesis</keyword>
<keyword id="KW-0057">Aromatic amino acid biosynthesis</keyword>
<keyword id="KW-0210">Decarboxylase</keyword>
<keyword id="KW-0456">Lyase</keyword>
<keyword id="KW-0822">Tryptophan biosynthesis</keyword>
<sequence length="259" mass="28997">MILERIVTDNLPDLERRKMRLPLAKLQELVLDIPYLPIDMAMKLKGRQVRLIAEVKKASPSKGIIRPDFDPVDIAGIYARNGASAISVLTEEHHFMGSLDNLKKIRESGVASKLPLLRKDFIHDPYQVYESRLYGADAILLIVAMLSPERLQELLSLSHKLGMKCLVEVHTRSELEIALESNARIIGLNNRDLHTFKIDLTVTERLRPLIPPECIVVSESGIQTRADISRLEELGVDAVLVGEALTASVDIAAKMRELL</sequence>